<feature type="signal peptide" evidence="3">
    <location>
        <begin position="1"/>
        <end position="19"/>
    </location>
</feature>
<feature type="chain" id="PRO_5033114650" description="Class I hydrophobin hgfII">
    <location>
        <begin position="20"/>
        <end position="108"/>
    </location>
</feature>
<feature type="glycosylation site" description="N-linked (GlcNAc...) asparagine" evidence="4">
    <location>
        <position position="92"/>
    </location>
</feature>
<feature type="disulfide bond" evidence="1">
    <location>
        <begin position="28"/>
        <end position="89"/>
    </location>
</feature>
<feature type="disulfide bond" evidence="1">
    <location>
        <begin position="35"/>
        <end position="83"/>
    </location>
</feature>
<feature type="disulfide bond" evidence="1">
    <location>
        <begin position="36"/>
        <end position="69"/>
    </location>
</feature>
<feature type="disulfide bond" evidence="1">
    <location>
        <begin position="90"/>
        <end position="103"/>
    </location>
</feature>
<gene>
    <name evidence="6" type="primary">hgfII</name>
</gene>
<sequence>MFSRIAAVSFLALPLLAAATPVLRRGDCNTGPIQCCQSTETAGSAAGSALLGLLGVVVQSVDVVLGLNCSPISVIGVGSGSACDASPVCCENNSVGGIISIGCVPIQL</sequence>
<organism>
    <name type="scientific">Grifola frondosa</name>
    <name type="common">Maitake</name>
    <name type="synonym">Polyporus frondosus</name>
    <dbReference type="NCBI Taxonomy" id="5627"/>
    <lineage>
        <taxon>Eukaryota</taxon>
        <taxon>Fungi</taxon>
        <taxon>Dikarya</taxon>
        <taxon>Basidiomycota</taxon>
        <taxon>Agaricomycotina</taxon>
        <taxon>Agaricomycetes</taxon>
        <taxon>Polyporales</taxon>
        <taxon>Grifolaceae</taxon>
        <taxon>Grifola</taxon>
    </lineage>
</organism>
<accession>A0A8A5N547</accession>
<proteinExistence type="evidence at protein level"/>
<name>HGF2_GRIFR</name>
<protein>
    <recommendedName>
        <fullName evidence="6">Class I hydrophobin hgfII</fullName>
    </recommendedName>
</protein>
<reference key="1">
    <citation type="journal article" date="2022" name="Front. Microbiol.">
        <title>A novel hydrophobin encoded by hgfII from Grifola frondosa exhibiting excellent self-assembly ability.</title>
        <authorList>
            <person name="Yang J."/>
            <person name="Ge L."/>
            <person name="Song B."/>
            <person name="Ma Z."/>
            <person name="Yang X."/>
            <person name="Wang B."/>
            <person name="Dai Y."/>
            <person name="Xu H."/>
            <person name="Qiao M."/>
        </authorList>
    </citation>
    <scope>NUCLEOTIDE SEQUENCE [GENOMIC DNA]</scope>
    <scope>TISSUE SPECIFICITY</scope>
    <scope>FUNCTION</scope>
    <scope>SUBUNIT</scope>
    <scope>BIOTECHNOLOGY</scope>
    <source>
        <strain>CICC-50075</strain>
    </source>
</reference>
<evidence type="ECO:0000250" key="1">
    <source>
        <dbReference type="UniProtKB" id="D8QCG9"/>
    </source>
</evidence>
<evidence type="ECO:0000250" key="2">
    <source>
        <dbReference type="UniProtKB" id="P16933"/>
    </source>
</evidence>
<evidence type="ECO:0000255" key="3"/>
<evidence type="ECO:0000255" key="4">
    <source>
        <dbReference type="PROSITE-ProRule" id="PRU00498"/>
    </source>
</evidence>
<evidence type="ECO:0000269" key="5">
    <source>
    </source>
</evidence>
<evidence type="ECO:0000303" key="6">
    <source>
    </source>
</evidence>
<evidence type="ECO:0000305" key="7"/>
<comment type="function">
    <text evidence="5 7">Aerial growth, conidiation, and dispersal of filamentous fungi in the environment rely upon a capability of their secreting small amphipathic proteins called hydrophobins (HPBs) with low sequence identity. Class I can self-assemble into an outermost layer of rodlet bundles on aerial cell surfaces, conferring cellular hydrophobicity that supports fungal growth, development and dispersal; whereas Class II form highly ordered films at water-air interfaces through intermolecular interactions but contribute nothing to the rodlet structure (Probable). HgfII is a class I hydrophobin that is involved in cell surface hydrophobicity and might play a key role during the growth and development of hyphae cultured in liquid medium (PubMed:36160239).</text>
</comment>
<comment type="subunit">
    <text evidence="5">Self-assembles to form functional amyloid fibrils called rodlets with a diameter of 15-30 nm. Self-assembly into fibrillar rodlets occurs spontaneously at hydrophobic:hydrophilic interfaces and the rodlets further associate laterally to form amphipathic monolayers.</text>
</comment>
<comment type="subcellular location">
    <subcellularLocation>
        <location evidence="2">Secreted</location>
    </subcellularLocation>
    <subcellularLocation>
        <location evidence="2">Secreted</location>
        <location evidence="2">Cell wall</location>
    </subcellularLocation>
</comment>
<comment type="tissue specificity">
    <text evidence="5">Highky expressed in hyphae cultured in liquid medium.</text>
</comment>
<comment type="biotechnology">
    <text evidence="5">HgfII displays a better dispersion and emulsion stability in an aqueous solution with soybean oil than hgfI, which is of great significance in terms of expanding practical applications of class I hydrophobins.</text>
</comment>
<comment type="similarity">
    <text evidence="7">Belongs to the fungal hydrophobin family.</text>
</comment>
<dbReference type="EMBL" id="MW592703">
    <property type="protein sequence ID" value="QTF98737.1"/>
    <property type="molecule type" value="Genomic_DNA"/>
</dbReference>
<dbReference type="SMR" id="A0A8A5N547"/>
<dbReference type="GO" id="GO:0005576">
    <property type="term" value="C:extracellular region"/>
    <property type="evidence" value="ECO:0007669"/>
    <property type="project" value="UniProtKB-KW"/>
</dbReference>
<dbReference type="GO" id="GO:0009277">
    <property type="term" value="C:fungal-type cell wall"/>
    <property type="evidence" value="ECO:0007669"/>
    <property type="project" value="InterPro"/>
</dbReference>
<dbReference type="GO" id="GO:0005199">
    <property type="term" value="F:structural constituent of cell wall"/>
    <property type="evidence" value="ECO:0007669"/>
    <property type="project" value="InterPro"/>
</dbReference>
<dbReference type="CDD" id="cd23507">
    <property type="entry name" value="hydrophobin_I"/>
    <property type="match status" value="1"/>
</dbReference>
<dbReference type="InterPro" id="IPR001338">
    <property type="entry name" value="Hydrophobin"/>
</dbReference>
<dbReference type="Pfam" id="PF01185">
    <property type="entry name" value="Hydrophobin"/>
    <property type="match status" value="1"/>
</dbReference>
<dbReference type="SMART" id="SM00075">
    <property type="entry name" value="HYDRO"/>
    <property type="match status" value="1"/>
</dbReference>
<keyword id="KW-0134">Cell wall</keyword>
<keyword id="KW-1015">Disulfide bond</keyword>
<keyword id="KW-0325">Glycoprotein</keyword>
<keyword id="KW-0964">Secreted</keyword>
<keyword id="KW-0732">Signal</keyword>